<protein>
    <recommendedName>
        <fullName>Chemotaxis protein methyltransferase</fullName>
        <ecNumber>2.1.1.80</ecNumber>
    </recommendedName>
</protein>
<sequence>MKQTTSTAARESGSALAQMAQRLPLSDAHFRRISQLIYQRAGIVLAAHKREMVYNRLVRRLRLLGIHDFGDYLALLESDPHSAEWQAFINALTTNLTAFFREAHHFPILAEHARSRPGNYSVWSTAASTGEEPYSIAITLGDALGERAGSCQVWASDIDTQVLEKAEAGIYRHEDLRTLTPIQMQRYFLRGTGPHQGLVRVRQELAARVNFQPLNLLAAEWALPGPFDAIFCRNVMIYFDKPTQERILRRFVPLLKPGGLLFAGHSENFSQISRDFYLRGQTVYGLTKEK</sequence>
<organism>
    <name type="scientific">Klebsiella aerogenes (strain ATCC 13048 / DSM 30053 / CCUG 1429 / JCM 1235 / KCTC 2190 / NBRC 13534 / NCIMB 10102 / NCTC 10006 / CDC 819-56)</name>
    <name type="common">Enterobacter aerogenes</name>
    <dbReference type="NCBI Taxonomy" id="1028307"/>
    <lineage>
        <taxon>Bacteria</taxon>
        <taxon>Pseudomonadati</taxon>
        <taxon>Pseudomonadota</taxon>
        <taxon>Gammaproteobacteria</taxon>
        <taxon>Enterobacterales</taxon>
        <taxon>Enterobacteriaceae</taxon>
        <taxon>Klebsiella/Raoultella group</taxon>
        <taxon>Klebsiella</taxon>
    </lineage>
</organism>
<accession>P21824</accession>
<accession>G0DZQ8</accession>
<name>CHER_KLEAK</name>
<proteinExistence type="predicted"/>
<gene>
    <name type="primary">cheR</name>
    <name type="ordered locus">EAE_15545</name>
</gene>
<comment type="function">
    <text>Methylation of the membrane-bound methyl-accepting chemotaxis proteins (MCP) to form gamma-glutamyl methyl ester residues in MCP.</text>
</comment>
<comment type="catalytic activity">
    <reaction>
        <text>L-glutamyl-[protein] + S-adenosyl-L-methionine = [protein]-L-glutamate 5-O-methyl ester + S-adenosyl-L-homocysteine</text>
        <dbReference type="Rhea" id="RHEA:24452"/>
        <dbReference type="Rhea" id="RHEA-COMP:10208"/>
        <dbReference type="Rhea" id="RHEA-COMP:10311"/>
        <dbReference type="ChEBI" id="CHEBI:29973"/>
        <dbReference type="ChEBI" id="CHEBI:57856"/>
        <dbReference type="ChEBI" id="CHEBI:59789"/>
        <dbReference type="ChEBI" id="CHEBI:82795"/>
        <dbReference type="EC" id="2.1.1.80"/>
    </reaction>
</comment>
<dbReference type="EC" id="2.1.1.80"/>
<dbReference type="EMBL" id="CP002824">
    <property type="protein sequence ID" value="AEG98020.1"/>
    <property type="molecule type" value="Genomic_DNA"/>
</dbReference>
<dbReference type="EMBL" id="M26411">
    <property type="protein sequence ID" value="AAA24799.1"/>
    <property type="molecule type" value="Genomic_DNA"/>
</dbReference>
<dbReference type="PIR" id="E32302">
    <property type="entry name" value="E32302"/>
</dbReference>
<dbReference type="RefSeq" id="WP_015367340.1">
    <property type="nucleotide sequence ID" value="NC_015663.1"/>
</dbReference>
<dbReference type="RefSeq" id="YP_004593299.1">
    <property type="nucleotide sequence ID" value="NC_015663.1"/>
</dbReference>
<dbReference type="SMR" id="P21824"/>
<dbReference type="GeneID" id="93311297"/>
<dbReference type="KEGG" id="eae:EAE_15545"/>
<dbReference type="PATRIC" id="fig|1028307.3.peg.3109"/>
<dbReference type="eggNOG" id="COG1352">
    <property type="taxonomic scope" value="Bacteria"/>
</dbReference>
<dbReference type="HOGENOM" id="CLU_025854_0_0_6"/>
<dbReference type="OrthoDB" id="9816309at2"/>
<dbReference type="Proteomes" id="UP000008881">
    <property type="component" value="Chromosome"/>
</dbReference>
<dbReference type="GO" id="GO:0008983">
    <property type="term" value="F:protein-glutamate O-methyltransferase activity"/>
    <property type="evidence" value="ECO:0007669"/>
    <property type="project" value="UniProtKB-EC"/>
</dbReference>
<dbReference type="GO" id="GO:0006935">
    <property type="term" value="P:chemotaxis"/>
    <property type="evidence" value="ECO:0007669"/>
    <property type="project" value="UniProtKB-KW"/>
</dbReference>
<dbReference type="GO" id="GO:0032259">
    <property type="term" value="P:methylation"/>
    <property type="evidence" value="ECO:0007669"/>
    <property type="project" value="UniProtKB-KW"/>
</dbReference>
<dbReference type="CDD" id="cd02440">
    <property type="entry name" value="AdoMet_MTases"/>
    <property type="match status" value="1"/>
</dbReference>
<dbReference type="Gene3D" id="1.10.155.10">
    <property type="entry name" value="Chemotaxis receptor methyltransferase CheR, N-terminal domain"/>
    <property type="match status" value="1"/>
</dbReference>
<dbReference type="Gene3D" id="3.40.50.150">
    <property type="entry name" value="Vaccinia Virus protein VP39"/>
    <property type="match status" value="1"/>
</dbReference>
<dbReference type="InterPro" id="IPR050903">
    <property type="entry name" value="Bact_Chemotaxis_MeTrfase"/>
</dbReference>
<dbReference type="InterPro" id="IPR026024">
    <property type="entry name" value="Chemotaxis_MeTrfase_CheR"/>
</dbReference>
<dbReference type="InterPro" id="IPR022642">
    <property type="entry name" value="CheR_C"/>
</dbReference>
<dbReference type="InterPro" id="IPR000780">
    <property type="entry name" value="CheR_MeTrfase"/>
</dbReference>
<dbReference type="InterPro" id="IPR022641">
    <property type="entry name" value="CheR_N"/>
</dbReference>
<dbReference type="InterPro" id="IPR036804">
    <property type="entry name" value="CheR_N_sf"/>
</dbReference>
<dbReference type="InterPro" id="IPR029063">
    <property type="entry name" value="SAM-dependent_MTases_sf"/>
</dbReference>
<dbReference type="NCBIfam" id="NF007902">
    <property type="entry name" value="PRK10611.1"/>
    <property type="match status" value="1"/>
</dbReference>
<dbReference type="PANTHER" id="PTHR24422">
    <property type="entry name" value="CHEMOTAXIS PROTEIN METHYLTRANSFERASE"/>
    <property type="match status" value="1"/>
</dbReference>
<dbReference type="PANTHER" id="PTHR24422:SF19">
    <property type="entry name" value="CHEMOTAXIS PROTEIN METHYLTRANSFERASE"/>
    <property type="match status" value="1"/>
</dbReference>
<dbReference type="Pfam" id="PF01739">
    <property type="entry name" value="CheR"/>
    <property type="match status" value="1"/>
</dbReference>
<dbReference type="Pfam" id="PF03705">
    <property type="entry name" value="CheR_N"/>
    <property type="match status" value="1"/>
</dbReference>
<dbReference type="PIRSF" id="PIRSF000410">
    <property type="entry name" value="CheR"/>
    <property type="match status" value="1"/>
</dbReference>
<dbReference type="PRINTS" id="PR00996">
    <property type="entry name" value="CHERMTFRASE"/>
</dbReference>
<dbReference type="SMART" id="SM00138">
    <property type="entry name" value="MeTrc"/>
    <property type="match status" value="1"/>
</dbReference>
<dbReference type="SUPFAM" id="SSF47757">
    <property type="entry name" value="Chemotaxis receptor methyltransferase CheR, N-terminal domain"/>
    <property type="match status" value="1"/>
</dbReference>
<dbReference type="SUPFAM" id="SSF53335">
    <property type="entry name" value="S-adenosyl-L-methionine-dependent methyltransferases"/>
    <property type="match status" value="1"/>
</dbReference>
<dbReference type="PROSITE" id="PS50123">
    <property type="entry name" value="CHER"/>
    <property type="match status" value="1"/>
</dbReference>
<keyword id="KW-0145">Chemotaxis</keyword>
<keyword id="KW-0489">Methyltransferase</keyword>
<keyword id="KW-1185">Reference proteome</keyword>
<keyword id="KW-0949">S-adenosyl-L-methionine</keyword>
<keyword id="KW-0808">Transferase</keyword>
<feature type="chain" id="PRO_0000176034" description="Chemotaxis protein methyltransferase">
    <location>
        <begin position="1"/>
        <end position="290"/>
    </location>
</feature>
<feature type="domain" description="CheR-type methyltransferase" evidence="2">
    <location>
        <begin position="18"/>
        <end position="289"/>
    </location>
</feature>
<feature type="binding site" evidence="1">
    <location>
        <position position="95"/>
    </location>
    <ligand>
        <name>S-adenosyl-L-methionine</name>
        <dbReference type="ChEBI" id="CHEBI:59789"/>
    </ligand>
</feature>
<feature type="binding site" evidence="1">
    <location>
        <position position="97"/>
    </location>
    <ligand>
        <name>S-adenosyl-L-methionine</name>
        <dbReference type="ChEBI" id="CHEBI:59789"/>
    </ligand>
</feature>
<feature type="binding site" evidence="1">
    <location>
        <position position="101"/>
    </location>
    <ligand>
        <name>S-adenosyl-L-methionine</name>
        <dbReference type="ChEBI" id="CHEBI:59789"/>
    </ligand>
</feature>
<feature type="binding site" evidence="1">
    <location>
        <position position="132"/>
    </location>
    <ligand>
        <name>S-adenosyl-L-methionine</name>
        <dbReference type="ChEBI" id="CHEBI:59789"/>
    </ligand>
</feature>
<feature type="binding site" evidence="1">
    <location>
        <position position="157"/>
    </location>
    <ligand>
        <name>S-adenosyl-L-methionine</name>
        <dbReference type="ChEBI" id="CHEBI:59789"/>
    </ligand>
</feature>
<feature type="binding site" evidence="1">
    <location>
        <begin position="215"/>
        <end position="216"/>
    </location>
    <ligand>
        <name>S-adenosyl-L-methionine</name>
        <dbReference type="ChEBI" id="CHEBI:59789"/>
    </ligand>
</feature>
<feature type="binding site" evidence="1">
    <location>
        <begin position="233"/>
        <end position="234"/>
    </location>
    <ligand>
        <name>S-adenosyl-L-methionine</name>
        <dbReference type="ChEBI" id="CHEBI:59789"/>
    </ligand>
</feature>
<feature type="sequence conflict" description="In Ref. 2; AAA24799." evidence="3" ref="2">
    <original>TTST</original>
    <variation>DDIN</variation>
    <location>
        <begin position="4"/>
        <end position="7"/>
    </location>
</feature>
<feature type="sequence conflict" description="In Ref. 2; AAA24799." evidence="3" ref="2">
    <original>L</original>
    <variation>V</variation>
    <location>
        <position position="16"/>
    </location>
</feature>
<feature type="sequence conflict" description="In Ref. 2; AAA24799." evidence="3" ref="2">
    <original>A</original>
    <variation>P</variation>
    <location>
        <position position="47"/>
    </location>
</feature>
<reference key="1">
    <citation type="journal article" date="2012" name="J. Bacteriol.">
        <title>Complete genome sequence of Enterobacter aerogenes KCTC 2190.</title>
        <authorList>
            <person name="Shin S.H."/>
            <person name="Kim S."/>
            <person name="Kim J.Y."/>
            <person name="Lee S."/>
            <person name="Um Y."/>
            <person name="Oh M.K."/>
            <person name="Kim Y.R."/>
            <person name="Lee J."/>
            <person name="Yang K.S."/>
        </authorList>
    </citation>
    <scope>NUCLEOTIDE SEQUENCE [LARGE SCALE GENOMIC DNA]</scope>
    <source>
        <strain>ATCC 13048 / DSM 30053 / CCUG 1429 / JCM 1235 / KCTC 2190 / NBRC 13534 / NCIMB 10102 / NCTC 10006 / CDC 819-56</strain>
    </source>
</reference>
<reference key="2">
    <citation type="journal article" date="1989" name="J. Bacteriol.">
        <title>Evolution of chemotactic-signal transducers in enteric bacteria.</title>
        <authorList>
            <person name="Dahl M.K."/>
            <person name="Boos W."/>
            <person name="Manson M.D."/>
        </authorList>
    </citation>
    <scope>NUCLEOTIDE SEQUENCE [GENOMIC DNA] OF 1-100</scope>
    <source>
        <strain>ATCC 13048 / DSM 30053 / CCUG 1429 / JCM 1235 / KCTC 2190 / NBRC 13534 / NCIMB 10102 / NCTC 10006 / CDC 819-56</strain>
    </source>
</reference>
<evidence type="ECO:0000250" key="1"/>
<evidence type="ECO:0000255" key="2">
    <source>
        <dbReference type="PROSITE-ProRule" id="PRU00051"/>
    </source>
</evidence>
<evidence type="ECO:0000305" key="3"/>